<accession>Q8Z685</accession>
<protein>
    <recommendedName>
        <fullName evidence="2">Fatty acid metabolism regulator protein</fullName>
    </recommendedName>
</protein>
<evidence type="ECO:0000250" key="1"/>
<evidence type="ECO:0000255" key="2">
    <source>
        <dbReference type="HAMAP-Rule" id="MF_00696"/>
    </source>
</evidence>
<dbReference type="EMBL" id="AL513382">
    <property type="protein sequence ID" value="CAD05488.1"/>
    <property type="molecule type" value="Genomic_DNA"/>
</dbReference>
<dbReference type="EMBL" id="AE014613">
    <property type="protein sequence ID" value="AAO68738.1"/>
    <property type="molecule type" value="Genomic_DNA"/>
</dbReference>
<dbReference type="RefSeq" id="NP_456312.1">
    <property type="nucleotide sequence ID" value="NC_003198.1"/>
</dbReference>
<dbReference type="RefSeq" id="WP_000234821.1">
    <property type="nucleotide sequence ID" value="NZ_WSUR01000004.1"/>
</dbReference>
<dbReference type="SMR" id="Q8Z685"/>
<dbReference type="STRING" id="220341.gene:17585853"/>
<dbReference type="KEGG" id="stt:t1072"/>
<dbReference type="KEGG" id="sty:STY1934"/>
<dbReference type="PATRIC" id="fig|220341.7.peg.1951"/>
<dbReference type="eggNOG" id="COG2186">
    <property type="taxonomic scope" value="Bacteria"/>
</dbReference>
<dbReference type="HOGENOM" id="CLU_017584_9_4_6"/>
<dbReference type="OMA" id="TRVLDWR"/>
<dbReference type="OrthoDB" id="5683977at2"/>
<dbReference type="Proteomes" id="UP000000541">
    <property type="component" value="Chromosome"/>
</dbReference>
<dbReference type="Proteomes" id="UP000002670">
    <property type="component" value="Chromosome"/>
</dbReference>
<dbReference type="GO" id="GO:0005737">
    <property type="term" value="C:cytoplasm"/>
    <property type="evidence" value="ECO:0007669"/>
    <property type="project" value="UniProtKB-SubCell"/>
</dbReference>
<dbReference type="GO" id="GO:0003677">
    <property type="term" value="F:DNA binding"/>
    <property type="evidence" value="ECO:0007669"/>
    <property type="project" value="UniProtKB-KW"/>
</dbReference>
<dbReference type="GO" id="GO:0003700">
    <property type="term" value="F:DNA-binding transcription factor activity"/>
    <property type="evidence" value="ECO:0007669"/>
    <property type="project" value="UniProtKB-UniRule"/>
</dbReference>
<dbReference type="GO" id="GO:0000062">
    <property type="term" value="F:fatty-acyl-CoA binding"/>
    <property type="evidence" value="ECO:0007669"/>
    <property type="project" value="InterPro"/>
</dbReference>
<dbReference type="GO" id="GO:0006631">
    <property type="term" value="P:fatty acid metabolic process"/>
    <property type="evidence" value="ECO:0007669"/>
    <property type="project" value="UniProtKB-KW"/>
</dbReference>
<dbReference type="GO" id="GO:0019217">
    <property type="term" value="P:regulation of fatty acid metabolic process"/>
    <property type="evidence" value="ECO:0007669"/>
    <property type="project" value="UniProtKB-UniRule"/>
</dbReference>
<dbReference type="CDD" id="cd07377">
    <property type="entry name" value="WHTH_GntR"/>
    <property type="match status" value="1"/>
</dbReference>
<dbReference type="FunFam" id="1.10.10.10:FF:000036">
    <property type="entry name" value="Fatty acid metabolism regulator protein"/>
    <property type="match status" value="1"/>
</dbReference>
<dbReference type="FunFam" id="1.20.120.530:FF:000003">
    <property type="entry name" value="Fatty acid metabolism regulator protein"/>
    <property type="match status" value="1"/>
</dbReference>
<dbReference type="Gene3D" id="1.20.120.530">
    <property type="entry name" value="GntR ligand-binding domain-like"/>
    <property type="match status" value="1"/>
</dbReference>
<dbReference type="Gene3D" id="1.10.10.10">
    <property type="entry name" value="Winged helix-like DNA-binding domain superfamily/Winged helix DNA-binding domain"/>
    <property type="match status" value="1"/>
</dbReference>
<dbReference type="HAMAP" id="MF_00696">
    <property type="entry name" value="HTH_FadR"/>
    <property type="match status" value="1"/>
</dbReference>
<dbReference type="InterPro" id="IPR014178">
    <property type="entry name" value="FA-response_TF_FadR"/>
</dbReference>
<dbReference type="InterPro" id="IPR028374">
    <property type="entry name" value="FadR_C"/>
</dbReference>
<dbReference type="InterPro" id="IPR008920">
    <property type="entry name" value="TF_FadR/GntR_C"/>
</dbReference>
<dbReference type="InterPro" id="IPR000524">
    <property type="entry name" value="Tscrpt_reg_HTH_GntR"/>
</dbReference>
<dbReference type="InterPro" id="IPR036388">
    <property type="entry name" value="WH-like_DNA-bd_sf"/>
</dbReference>
<dbReference type="InterPro" id="IPR036390">
    <property type="entry name" value="WH_DNA-bd_sf"/>
</dbReference>
<dbReference type="NCBIfam" id="TIGR02812">
    <property type="entry name" value="fadR_gamma"/>
    <property type="match status" value="1"/>
</dbReference>
<dbReference type="NCBIfam" id="NF003444">
    <property type="entry name" value="PRK04984.1"/>
    <property type="match status" value="1"/>
</dbReference>
<dbReference type="PANTHER" id="PTHR43537:SF52">
    <property type="entry name" value="FATTY ACID METABOLISM REGULATOR PROTEIN"/>
    <property type="match status" value="1"/>
</dbReference>
<dbReference type="PANTHER" id="PTHR43537">
    <property type="entry name" value="TRANSCRIPTIONAL REGULATOR, GNTR FAMILY"/>
    <property type="match status" value="1"/>
</dbReference>
<dbReference type="Pfam" id="PF07840">
    <property type="entry name" value="FadR_C"/>
    <property type="match status" value="1"/>
</dbReference>
<dbReference type="Pfam" id="PF00392">
    <property type="entry name" value="GntR"/>
    <property type="match status" value="1"/>
</dbReference>
<dbReference type="PRINTS" id="PR00035">
    <property type="entry name" value="HTHGNTR"/>
</dbReference>
<dbReference type="SMART" id="SM00345">
    <property type="entry name" value="HTH_GNTR"/>
    <property type="match status" value="1"/>
</dbReference>
<dbReference type="SUPFAM" id="SSF48008">
    <property type="entry name" value="GntR ligand-binding domain-like"/>
    <property type="match status" value="1"/>
</dbReference>
<dbReference type="SUPFAM" id="SSF46785">
    <property type="entry name" value="Winged helix' DNA-binding domain"/>
    <property type="match status" value="1"/>
</dbReference>
<dbReference type="PROSITE" id="PS50949">
    <property type="entry name" value="HTH_GNTR"/>
    <property type="match status" value="1"/>
</dbReference>
<keyword id="KW-0010">Activator</keyword>
<keyword id="KW-0963">Cytoplasm</keyword>
<keyword id="KW-0238">DNA-binding</keyword>
<keyword id="KW-0276">Fatty acid metabolism</keyword>
<keyword id="KW-0443">Lipid metabolism</keyword>
<keyword id="KW-0678">Repressor</keyword>
<keyword id="KW-0804">Transcription</keyword>
<keyword id="KW-0805">Transcription regulation</keyword>
<gene>
    <name evidence="2" type="primary">fadR</name>
    <name type="ordered locus">STY1934</name>
    <name type="ordered locus">t1072</name>
</gene>
<comment type="function">
    <text evidence="2">Multifunctional regulator of fatty acid metabolism. Represses transcription of at least eight genes required for fatty acid transport and beta-oxidation including fadA, fadB, fadD, fadL and fadE. Activates transcription of at least three genes required for unsaturated fatty acid biosynthesis: fabA, fabB and iclR, the gene encoding the transcriptional regulator of the aceBAK operon encoding the glyoxylate shunt enzymes. Binding of FadR is specifically inhibited by long chain fatty acyl-CoA compounds (By similarity).</text>
</comment>
<comment type="subunit">
    <text evidence="2">Homodimer.</text>
</comment>
<comment type="subcellular location">
    <subcellularLocation>
        <location evidence="2">Cytoplasm</location>
    </subcellularLocation>
</comment>
<feature type="initiator methionine" description="Removed" evidence="1">
    <location>
        <position position="1"/>
    </location>
</feature>
<feature type="chain" id="PRO_0000050632" description="Fatty acid metabolism regulator protein">
    <location>
        <begin position="2"/>
        <end position="239"/>
    </location>
</feature>
<feature type="domain" description="HTH gntR-type" evidence="2">
    <location>
        <begin position="6"/>
        <end position="74"/>
    </location>
</feature>
<feature type="DNA-binding region" description="H-T-H motif" evidence="2">
    <location>
        <begin position="34"/>
        <end position="53"/>
    </location>
</feature>
<organism>
    <name type="scientific">Salmonella typhi</name>
    <dbReference type="NCBI Taxonomy" id="90370"/>
    <lineage>
        <taxon>Bacteria</taxon>
        <taxon>Pseudomonadati</taxon>
        <taxon>Pseudomonadota</taxon>
        <taxon>Gammaproteobacteria</taxon>
        <taxon>Enterobacterales</taxon>
        <taxon>Enterobacteriaceae</taxon>
        <taxon>Salmonella</taxon>
    </lineage>
</organism>
<reference key="1">
    <citation type="journal article" date="2001" name="Nature">
        <title>Complete genome sequence of a multiple drug resistant Salmonella enterica serovar Typhi CT18.</title>
        <authorList>
            <person name="Parkhill J."/>
            <person name="Dougan G."/>
            <person name="James K.D."/>
            <person name="Thomson N.R."/>
            <person name="Pickard D."/>
            <person name="Wain J."/>
            <person name="Churcher C.M."/>
            <person name="Mungall K.L."/>
            <person name="Bentley S.D."/>
            <person name="Holden M.T.G."/>
            <person name="Sebaihia M."/>
            <person name="Baker S."/>
            <person name="Basham D."/>
            <person name="Brooks K."/>
            <person name="Chillingworth T."/>
            <person name="Connerton P."/>
            <person name="Cronin A."/>
            <person name="Davis P."/>
            <person name="Davies R.M."/>
            <person name="Dowd L."/>
            <person name="White N."/>
            <person name="Farrar J."/>
            <person name="Feltwell T."/>
            <person name="Hamlin N."/>
            <person name="Haque A."/>
            <person name="Hien T.T."/>
            <person name="Holroyd S."/>
            <person name="Jagels K."/>
            <person name="Krogh A."/>
            <person name="Larsen T.S."/>
            <person name="Leather S."/>
            <person name="Moule S."/>
            <person name="O'Gaora P."/>
            <person name="Parry C."/>
            <person name="Quail M.A."/>
            <person name="Rutherford K.M."/>
            <person name="Simmonds M."/>
            <person name="Skelton J."/>
            <person name="Stevens K."/>
            <person name="Whitehead S."/>
            <person name="Barrell B.G."/>
        </authorList>
    </citation>
    <scope>NUCLEOTIDE SEQUENCE [LARGE SCALE GENOMIC DNA]</scope>
    <source>
        <strain>CT18</strain>
    </source>
</reference>
<reference key="2">
    <citation type="journal article" date="2003" name="J. Bacteriol.">
        <title>Comparative genomics of Salmonella enterica serovar Typhi strains Ty2 and CT18.</title>
        <authorList>
            <person name="Deng W."/>
            <person name="Liou S.-R."/>
            <person name="Plunkett G. III"/>
            <person name="Mayhew G.F."/>
            <person name="Rose D.J."/>
            <person name="Burland V."/>
            <person name="Kodoyianni V."/>
            <person name="Schwartz D.C."/>
            <person name="Blattner F.R."/>
        </authorList>
    </citation>
    <scope>NUCLEOTIDE SEQUENCE [LARGE SCALE GENOMIC DNA]</scope>
    <source>
        <strain>ATCC 700931 / Ty2</strain>
    </source>
</reference>
<name>FADR_SALTI</name>
<proteinExistence type="inferred from homology"/>
<sequence>MVIKAQSPAGFAEEYIIESIWNNCFPPGTILPAERELSELIGVTRTTLREVLQRLARDGWLTIQHGKPTKVNNFWETSGLNILETLARLDHESVPQLIDNLLSVRTNISTIFIRTALRQHPDKAQEVLATAHEVADHADAFADLDYNIFRGLAFASGNPIYGLILNGMKGLYTRIGRHYFANPEARSLALGFYHKLSSLCEQGAHDQVYETVRRYGHDSGEIWHRMQKNLPGDLAIQGR</sequence>